<geneLocation type="chloroplast"/>
<keyword id="KW-0150">Chloroplast</keyword>
<keyword id="KW-0472">Membrane</keyword>
<keyword id="KW-0520">NAD</keyword>
<keyword id="KW-0521">NADP</keyword>
<keyword id="KW-0934">Plastid</keyword>
<keyword id="KW-0618">Plastoquinone</keyword>
<keyword id="KW-0874">Quinone</keyword>
<keyword id="KW-0793">Thylakoid</keyword>
<keyword id="KW-1278">Translocase</keyword>
<keyword id="KW-0812">Transmembrane</keyword>
<keyword id="KW-1133">Transmembrane helix</keyword>
<keyword id="KW-0813">Transport</keyword>
<gene>
    <name evidence="1" type="primary">ndhB2</name>
</gene>
<reference key="1">
    <citation type="journal article" date="2003" name="Plant Syst. Evol.">
        <title>The chloroplast genome of the 'basal' angiosperm Calycanthus fertilis -- structural and phylogenetic analyses.</title>
        <authorList>
            <person name="Goremykin V."/>
            <person name="Hirsch-Ernst K.I."/>
            <person name="Woelfl S."/>
            <person name="Hellwig F.H."/>
        </authorList>
    </citation>
    <scope>NUCLEOTIDE SEQUENCE [LARGE SCALE GENOMIC DNA]</scope>
</reference>
<dbReference type="EC" id="7.1.1.-" evidence="1"/>
<dbReference type="EMBL" id="AJ428413">
    <property type="protein sequence ID" value="CAD28784.1"/>
    <property type="molecule type" value="Genomic_DNA"/>
</dbReference>
<dbReference type="SMR" id="P0CC39"/>
<dbReference type="GO" id="GO:0009535">
    <property type="term" value="C:chloroplast thylakoid membrane"/>
    <property type="evidence" value="ECO:0007669"/>
    <property type="project" value="UniProtKB-SubCell"/>
</dbReference>
<dbReference type="GO" id="GO:0008137">
    <property type="term" value="F:NADH dehydrogenase (ubiquinone) activity"/>
    <property type="evidence" value="ECO:0007669"/>
    <property type="project" value="InterPro"/>
</dbReference>
<dbReference type="GO" id="GO:0048038">
    <property type="term" value="F:quinone binding"/>
    <property type="evidence" value="ECO:0007669"/>
    <property type="project" value="UniProtKB-KW"/>
</dbReference>
<dbReference type="GO" id="GO:0042773">
    <property type="term" value="P:ATP synthesis coupled electron transport"/>
    <property type="evidence" value="ECO:0007669"/>
    <property type="project" value="InterPro"/>
</dbReference>
<dbReference type="GO" id="GO:0019684">
    <property type="term" value="P:photosynthesis, light reaction"/>
    <property type="evidence" value="ECO:0007669"/>
    <property type="project" value="UniProtKB-UniRule"/>
</dbReference>
<dbReference type="HAMAP" id="MF_00445">
    <property type="entry name" value="NDH1_NuoN_1"/>
    <property type="match status" value="1"/>
</dbReference>
<dbReference type="InterPro" id="IPR010096">
    <property type="entry name" value="NADH-Q_OxRdtase_suN/2"/>
</dbReference>
<dbReference type="InterPro" id="IPR001750">
    <property type="entry name" value="ND/Mrp_TM"/>
</dbReference>
<dbReference type="InterPro" id="IPR045693">
    <property type="entry name" value="Ndh2_N"/>
</dbReference>
<dbReference type="NCBIfam" id="TIGR01770">
    <property type="entry name" value="NDH_I_N"/>
    <property type="match status" value="1"/>
</dbReference>
<dbReference type="NCBIfam" id="NF002701">
    <property type="entry name" value="PRK02504.1"/>
    <property type="match status" value="1"/>
</dbReference>
<dbReference type="PANTHER" id="PTHR22773">
    <property type="entry name" value="NADH DEHYDROGENASE"/>
    <property type="match status" value="1"/>
</dbReference>
<dbReference type="Pfam" id="PF19530">
    <property type="entry name" value="Ndh2_N"/>
    <property type="match status" value="1"/>
</dbReference>
<dbReference type="Pfam" id="PF00361">
    <property type="entry name" value="Proton_antipo_M"/>
    <property type="match status" value="1"/>
</dbReference>
<dbReference type="PRINTS" id="PR01434">
    <property type="entry name" value="NADHDHGNASE5"/>
</dbReference>
<evidence type="ECO:0000255" key="1">
    <source>
        <dbReference type="HAMAP-Rule" id="MF_00445"/>
    </source>
</evidence>
<feature type="chain" id="PRO_0000391257" description="NAD(P)H-quinone oxidoreductase subunit 2 B, chloroplastic">
    <location>
        <begin position="1"/>
        <end position="510"/>
    </location>
</feature>
<feature type="transmembrane region" description="Helical" evidence="1">
    <location>
        <begin position="24"/>
        <end position="44"/>
    </location>
</feature>
<feature type="transmembrane region" description="Helical" evidence="1">
    <location>
        <begin position="57"/>
        <end position="77"/>
    </location>
</feature>
<feature type="transmembrane region" description="Helical" evidence="1">
    <location>
        <begin position="99"/>
        <end position="119"/>
    </location>
</feature>
<feature type="transmembrane region" description="Helical" evidence="1">
    <location>
        <begin position="124"/>
        <end position="144"/>
    </location>
</feature>
<feature type="transmembrane region" description="Helical" evidence="1">
    <location>
        <begin position="183"/>
        <end position="203"/>
    </location>
</feature>
<feature type="transmembrane region" description="Helical" evidence="1">
    <location>
        <begin position="227"/>
        <end position="247"/>
    </location>
</feature>
<feature type="transmembrane region" description="Helical" evidence="1">
    <location>
        <begin position="295"/>
        <end position="315"/>
    </location>
</feature>
<feature type="transmembrane region" description="Helical" evidence="1">
    <location>
        <begin position="323"/>
        <end position="343"/>
    </location>
</feature>
<feature type="transmembrane region" description="Helical" evidence="1">
    <location>
        <begin position="347"/>
        <end position="367"/>
    </location>
</feature>
<feature type="transmembrane region" description="Helical" evidence="1">
    <location>
        <begin position="395"/>
        <end position="415"/>
    </location>
</feature>
<feature type="transmembrane region" description="Helical" evidence="1">
    <location>
        <begin position="418"/>
        <end position="438"/>
    </location>
</feature>
<feature type="transmembrane region" description="Helical" evidence="1">
    <location>
        <begin position="484"/>
        <end position="504"/>
    </location>
</feature>
<sequence length="510" mass="56601">MIWHVQNENFILDSTRIFMKAFHLLLFHGSFIFPECILIFGLILLLMIDSTSDQKDIPWLYFISSTSLVMSITALLFRWREEPMISFSGNFQTNNFNEIFQFLILLCSTLCIPLSVEYIECTEMAITEFLLFVLTATLGGMFLCGANDLITIFVAPESFSLCSYLLSGYTKRDVRSNEATTKYLLMGGASSSILVHGFSWLYGSSGGEIELQEIVNGLINTQMYNSPGISIALISITVGIGFKLSPAPSHQWTPDVYEGSPTPVVAFLSVTSKVAASASATRIFDIPFYFSSNEWHLLLEILAILSMILGNLIAITQTSMKRMLAYSSIGQIGYVIIGIIVGDSNDGYASMITYMLFYISMNLGTFARIVSFGLRTGTDNIRDYAGLYTKDPFLALSSALCLLSLGGLPPLAGFFGKLHLFWCGWQAGLYFLVSIGLLTSVVSIYYYLKIIKLLMTGRNQEITPHVRNYRRSLLRSNNSIELSMIVCVIASTIPGISMNPIIAIAQDTLF</sequence>
<name>NU2C2_CALFG</name>
<accession>P0CC39</accession>
<accession>Q7Y736</accession>
<proteinExistence type="inferred from homology"/>
<organism>
    <name type="scientific">Calycanthus floridus var. glaucus</name>
    <name type="common">Eastern sweetshrub</name>
    <name type="synonym">Calycanthus fertilis var. ferax</name>
    <dbReference type="NCBI Taxonomy" id="212734"/>
    <lineage>
        <taxon>Eukaryota</taxon>
        <taxon>Viridiplantae</taxon>
        <taxon>Streptophyta</taxon>
        <taxon>Embryophyta</taxon>
        <taxon>Tracheophyta</taxon>
        <taxon>Spermatophyta</taxon>
        <taxon>Magnoliopsida</taxon>
        <taxon>Magnoliidae</taxon>
        <taxon>Laurales</taxon>
        <taxon>Calycanthaceae</taxon>
        <taxon>Calycanthus</taxon>
    </lineage>
</organism>
<comment type="function">
    <text evidence="1">NDH shuttles electrons from NAD(P)H:plastoquinone, via FMN and iron-sulfur (Fe-S) centers, to quinones in the photosynthetic chain and possibly in a chloroplast respiratory chain. The immediate electron acceptor for the enzyme in this species is believed to be plastoquinone. Couples the redox reaction to proton translocation, and thus conserves the redox energy in a proton gradient.</text>
</comment>
<comment type="catalytic activity">
    <reaction evidence="1">
        <text>a plastoquinone + NADH + (n+1) H(+)(in) = a plastoquinol + NAD(+) + n H(+)(out)</text>
        <dbReference type="Rhea" id="RHEA:42608"/>
        <dbReference type="Rhea" id="RHEA-COMP:9561"/>
        <dbReference type="Rhea" id="RHEA-COMP:9562"/>
        <dbReference type="ChEBI" id="CHEBI:15378"/>
        <dbReference type="ChEBI" id="CHEBI:17757"/>
        <dbReference type="ChEBI" id="CHEBI:57540"/>
        <dbReference type="ChEBI" id="CHEBI:57945"/>
        <dbReference type="ChEBI" id="CHEBI:62192"/>
    </reaction>
</comment>
<comment type="catalytic activity">
    <reaction evidence="1">
        <text>a plastoquinone + NADPH + (n+1) H(+)(in) = a plastoquinol + NADP(+) + n H(+)(out)</text>
        <dbReference type="Rhea" id="RHEA:42612"/>
        <dbReference type="Rhea" id="RHEA-COMP:9561"/>
        <dbReference type="Rhea" id="RHEA-COMP:9562"/>
        <dbReference type="ChEBI" id="CHEBI:15378"/>
        <dbReference type="ChEBI" id="CHEBI:17757"/>
        <dbReference type="ChEBI" id="CHEBI:57783"/>
        <dbReference type="ChEBI" id="CHEBI:58349"/>
        <dbReference type="ChEBI" id="CHEBI:62192"/>
    </reaction>
</comment>
<comment type="subunit">
    <text evidence="1">NDH is composed of at least 16 different subunits, 5 of which are encoded in the nucleus.</text>
</comment>
<comment type="subcellular location">
    <subcellularLocation>
        <location evidence="1">Plastid</location>
        <location evidence="1">Chloroplast thylakoid membrane</location>
        <topology evidence="1">Multi-pass membrane protein</topology>
    </subcellularLocation>
</comment>
<comment type="similarity">
    <text evidence="1">Belongs to the complex I subunit 2 family.</text>
</comment>
<protein>
    <recommendedName>
        <fullName evidence="1">NAD(P)H-quinone oxidoreductase subunit 2 B, chloroplastic</fullName>
        <ecNumber evidence="1">7.1.1.-</ecNumber>
    </recommendedName>
    <alternativeName>
        <fullName evidence="1">NAD(P)H dehydrogenase, subunit 2 B</fullName>
    </alternativeName>
    <alternativeName>
        <fullName evidence="1">NADH-plastoquinone oxidoreductase subunit 2 B</fullName>
    </alternativeName>
</protein>